<proteinExistence type="inferred from homology"/>
<dbReference type="EC" id="2.7.7.4" evidence="1"/>
<dbReference type="EMBL" id="CH408031">
    <property type="protein sequence ID" value="EAQ89942.1"/>
    <property type="molecule type" value="Genomic_DNA"/>
</dbReference>
<dbReference type="RefSeq" id="XP_001222656.1">
    <property type="nucleotide sequence ID" value="XM_001222655.1"/>
</dbReference>
<dbReference type="SMR" id="Q2H454"/>
<dbReference type="FunCoup" id="Q2H454">
    <property type="interactions" value="520"/>
</dbReference>
<dbReference type="STRING" id="306901.Q2H454"/>
<dbReference type="GeneID" id="4391194"/>
<dbReference type="VEuPathDB" id="FungiDB:CHGG_06561"/>
<dbReference type="eggNOG" id="KOG0636">
    <property type="taxonomic scope" value="Eukaryota"/>
</dbReference>
<dbReference type="HOGENOM" id="CLU_022950_0_0_1"/>
<dbReference type="InParanoid" id="Q2H454"/>
<dbReference type="OMA" id="MEMRYAG"/>
<dbReference type="OrthoDB" id="468at2759"/>
<dbReference type="UniPathway" id="UPA00140">
    <property type="reaction ID" value="UER00204"/>
</dbReference>
<dbReference type="Proteomes" id="UP000001056">
    <property type="component" value="Unassembled WGS sequence"/>
</dbReference>
<dbReference type="GO" id="GO:0005737">
    <property type="term" value="C:cytoplasm"/>
    <property type="evidence" value="ECO:0007669"/>
    <property type="project" value="UniProtKB-SubCell"/>
</dbReference>
<dbReference type="GO" id="GO:0004020">
    <property type="term" value="F:adenylylsulfate kinase activity"/>
    <property type="evidence" value="ECO:0007669"/>
    <property type="project" value="InterPro"/>
</dbReference>
<dbReference type="GO" id="GO:0005524">
    <property type="term" value="F:ATP binding"/>
    <property type="evidence" value="ECO:0007669"/>
    <property type="project" value="UniProtKB-KW"/>
</dbReference>
<dbReference type="GO" id="GO:0004781">
    <property type="term" value="F:sulfate adenylyltransferase (ATP) activity"/>
    <property type="evidence" value="ECO:0007669"/>
    <property type="project" value="UniProtKB-UniRule"/>
</dbReference>
<dbReference type="GO" id="GO:0019344">
    <property type="term" value="P:cysteine biosynthetic process"/>
    <property type="evidence" value="ECO:0007669"/>
    <property type="project" value="UniProtKB-KW"/>
</dbReference>
<dbReference type="GO" id="GO:0070814">
    <property type="term" value="P:hydrogen sulfide biosynthetic process"/>
    <property type="evidence" value="ECO:0007669"/>
    <property type="project" value="UniProtKB-UniRule"/>
</dbReference>
<dbReference type="GO" id="GO:0009086">
    <property type="term" value="P:methionine biosynthetic process"/>
    <property type="evidence" value="ECO:0007669"/>
    <property type="project" value="UniProtKB-KW"/>
</dbReference>
<dbReference type="GO" id="GO:0010134">
    <property type="term" value="P:sulfate assimilation via adenylyl sulfate reduction"/>
    <property type="evidence" value="ECO:0007669"/>
    <property type="project" value="TreeGrafter"/>
</dbReference>
<dbReference type="GO" id="GO:0019379">
    <property type="term" value="P:sulfate assimilation, phosphoadenylyl sulfate reduction by phosphoadenylyl-sulfate reductase (thioredoxin)"/>
    <property type="evidence" value="ECO:0007669"/>
    <property type="project" value="TreeGrafter"/>
</dbReference>
<dbReference type="CDD" id="cd02027">
    <property type="entry name" value="APSK"/>
    <property type="match status" value="1"/>
</dbReference>
<dbReference type="CDD" id="cd00517">
    <property type="entry name" value="ATPS"/>
    <property type="match status" value="1"/>
</dbReference>
<dbReference type="FunFam" id="3.10.400.10:FF:000003">
    <property type="entry name" value="Sulfate adenylyltransferase"/>
    <property type="match status" value="1"/>
</dbReference>
<dbReference type="FunFam" id="3.40.50.300:FF:000802">
    <property type="entry name" value="Sulfate adenylyltransferase"/>
    <property type="match status" value="1"/>
</dbReference>
<dbReference type="FunFam" id="3.40.50.620:FF:000052">
    <property type="entry name" value="Sulfate adenylyltransferase"/>
    <property type="match status" value="1"/>
</dbReference>
<dbReference type="Gene3D" id="3.40.50.620">
    <property type="entry name" value="HUPs"/>
    <property type="match status" value="1"/>
</dbReference>
<dbReference type="Gene3D" id="3.40.50.300">
    <property type="entry name" value="P-loop containing nucleotide triphosphate hydrolases"/>
    <property type="match status" value="1"/>
</dbReference>
<dbReference type="Gene3D" id="3.10.400.10">
    <property type="entry name" value="Sulfate adenylyltransferase"/>
    <property type="match status" value="1"/>
</dbReference>
<dbReference type="HAMAP" id="MF_03106">
    <property type="entry name" value="Sulf_adenylyltr_euk"/>
    <property type="match status" value="1"/>
</dbReference>
<dbReference type="InterPro" id="IPR002891">
    <property type="entry name" value="APS_kinase"/>
</dbReference>
<dbReference type="InterPro" id="IPR025980">
    <property type="entry name" value="ATP-Sase_PUA-like_dom"/>
</dbReference>
<dbReference type="InterPro" id="IPR027417">
    <property type="entry name" value="P-loop_NTPase"/>
</dbReference>
<dbReference type="InterPro" id="IPR015947">
    <property type="entry name" value="PUA-like_sf"/>
</dbReference>
<dbReference type="InterPro" id="IPR014729">
    <property type="entry name" value="Rossmann-like_a/b/a_fold"/>
</dbReference>
<dbReference type="InterPro" id="IPR027535">
    <property type="entry name" value="Sulf_adenylyltr_euk"/>
</dbReference>
<dbReference type="InterPro" id="IPR050512">
    <property type="entry name" value="Sulf_AdTrans/APS_kinase"/>
</dbReference>
<dbReference type="InterPro" id="IPR024951">
    <property type="entry name" value="Sulfurylase_cat_dom"/>
</dbReference>
<dbReference type="InterPro" id="IPR002650">
    <property type="entry name" value="Sulphate_adenylyltransferase"/>
</dbReference>
<dbReference type="NCBIfam" id="TIGR00455">
    <property type="entry name" value="apsK"/>
    <property type="match status" value="1"/>
</dbReference>
<dbReference type="NCBIfam" id="NF003013">
    <property type="entry name" value="PRK03846.1"/>
    <property type="match status" value="1"/>
</dbReference>
<dbReference type="NCBIfam" id="NF004040">
    <property type="entry name" value="PRK05537.1"/>
    <property type="match status" value="1"/>
</dbReference>
<dbReference type="NCBIfam" id="TIGR00339">
    <property type="entry name" value="sopT"/>
    <property type="match status" value="1"/>
</dbReference>
<dbReference type="PANTHER" id="PTHR42700">
    <property type="entry name" value="SULFATE ADENYLYLTRANSFERASE"/>
    <property type="match status" value="1"/>
</dbReference>
<dbReference type="PANTHER" id="PTHR42700:SF1">
    <property type="entry name" value="SULFATE ADENYLYLTRANSFERASE"/>
    <property type="match status" value="1"/>
</dbReference>
<dbReference type="Pfam" id="PF01583">
    <property type="entry name" value="APS_kinase"/>
    <property type="match status" value="1"/>
</dbReference>
<dbReference type="Pfam" id="PF01747">
    <property type="entry name" value="ATP-sulfurylase"/>
    <property type="match status" value="1"/>
</dbReference>
<dbReference type="Pfam" id="PF14306">
    <property type="entry name" value="PUA_2"/>
    <property type="match status" value="1"/>
</dbReference>
<dbReference type="SUPFAM" id="SSF52374">
    <property type="entry name" value="Nucleotidylyl transferase"/>
    <property type="match status" value="1"/>
</dbReference>
<dbReference type="SUPFAM" id="SSF52540">
    <property type="entry name" value="P-loop containing nucleoside triphosphate hydrolases"/>
    <property type="match status" value="1"/>
</dbReference>
<dbReference type="SUPFAM" id="SSF88697">
    <property type="entry name" value="PUA domain-like"/>
    <property type="match status" value="1"/>
</dbReference>
<reference key="1">
    <citation type="journal article" date="2015" name="Genome Announc.">
        <title>Draft genome sequence of the cellulolytic fungus Chaetomium globosum.</title>
        <authorList>
            <person name="Cuomo C.A."/>
            <person name="Untereiner W.A."/>
            <person name="Ma L.-J."/>
            <person name="Grabherr M."/>
            <person name="Birren B.W."/>
        </authorList>
    </citation>
    <scope>NUCLEOTIDE SEQUENCE [LARGE SCALE GENOMIC DNA]</scope>
    <source>
        <strain>ATCC 6205 / CBS 148.51 / DSM 1962 / NBRC 6347 / NRRL 1970</strain>
    </source>
</reference>
<gene>
    <name evidence="1" type="primary">MET3</name>
    <name type="ORF">CHGG_06561</name>
</gene>
<comment type="function">
    <text evidence="1">Catalyzes the first intracellular reaction of sulfate assimilation, forming adenosine-5'-phosphosulfate (APS) from inorganic sulfate and ATP. Plays an important role in sulfate activation as a component of the biosynthesis pathway of sulfur-containing amino acids.</text>
</comment>
<comment type="catalytic activity">
    <reaction evidence="1">
        <text>sulfate + ATP + H(+) = adenosine 5'-phosphosulfate + diphosphate</text>
        <dbReference type="Rhea" id="RHEA:18133"/>
        <dbReference type="ChEBI" id="CHEBI:15378"/>
        <dbReference type="ChEBI" id="CHEBI:16189"/>
        <dbReference type="ChEBI" id="CHEBI:30616"/>
        <dbReference type="ChEBI" id="CHEBI:33019"/>
        <dbReference type="ChEBI" id="CHEBI:58243"/>
        <dbReference type="EC" id="2.7.7.4"/>
    </reaction>
</comment>
<comment type="activity regulation">
    <text evidence="1">Allosterically inhibited by 3'-phosphoadenosine 5'-phosphosulfate (PAPS).</text>
</comment>
<comment type="pathway">
    <text evidence="1">Sulfur metabolism; hydrogen sulfide biosynthesis; sulfite from sulfate: step 1/3.</text>
</comment>
<comment type="subunit">
    <text evidence="1">Homohexamer. Dimer of trimers.</text>
</comment>
<comment type="subcellular location">
    <subcellularLocation>
        <location evidence="1">Cytoplasm</location>
    </subcellularLocation>
</comment>
<comment type="domain">
    <text evidence="1">The adenylyl-sulfate kinase (APS kinase) is non-functional. It is involved in allosteric regulation by PAPS. PAPS binding induces a large rotational rearrangement of domains lowering the substrate affinity of the enzyme.</text>
</comment>
<comment type="similarity">
    <text evidence="1">In the N-terminal section; belongs to the sulfate adenylyltransferase family.</text>
</comment>
<comment type="similarity">
    <text evidence="1">In the C-terminal section; belongs to the APS kinase family.</text>
</comment>
<keyword id="KW-0021">Allosteric enzyme</keyword>
<keyword id="KW-0028">Amino-acid biosynthesis</keyword>
<keyword id="KW-0067">ATP-binding</keyword>
<keyword id="KW-0198">Cysteine biosynthesis</keyword>
<keyword id="KW-0963">Cytoplasm</keyword>
<keyword id="KW-0486">Methionine biosynthesis</keyword>
<keyword id="KW-0547">Nucleotide-binding</keyword>
<keyword id="KW-0548">Nucleotidyltransferase</keyword>
<keyword id="KW-1185">Reference proteome</keyword>
<keyword id="KW-0808">Transferase</keyword>
<accession>Q2H454</accession>
<protein>
    <recommendedName>
        <fullName evidence="1">Sulfate adenylyltransferase</fullName>
        <ecNumber evidence="1">2.7.7.4</ecNumber>
    </recommendedName>
    <alternativeName>
        <fullName evidence="1">ATP-sulfurylase</fullName>
    </alternativeName>
    <alternativeName>
        <fullName evidence="1">Sulfate adenylate transferase</fullName>
        <shortName evidence="1">SAT</shortName>
    </alternativeName>
</protein>
<sequence length="573" mass="64156">MANSPHGGVLKDLLARDSPRHAELSTEAETLPALLLSERQLCDLELLLNGGFSPLEGFMTEQDYNGVVKENRLASGALFSMPITLDVDQATIDELSLKAGARITLRDFRDDRNLAILTVEDVYKPDKALEAKEVFGGDEEHPAVQYLYKTAKDFYVGGKLEAVNRLQHYDFVELRYTPSELRAHFDKLGWAKVVAFQTRNPMHRAHRELTVRAARSHHANVLIHPVVGLTKPGDIDHFTRVRVYKALLPRYPNGMAVLGLLPLAMRMGGPREAIWHAIIRKNHGATHFIVGRDHAGPGKNSKGVDFYGPYDAQYAVEKYRDELGIEVVPFQMMTYLPDSDEYAPVDQIPQGVRTLNISGTELRARLRSGREIPEWFSYPEVVKVLRESHPPRSQQGFTIFLTGYQNSGKDQIARALQVTLNQQGGRSVSLFLGETVRHELSSELGFSREDRDKNIARIGFVASELTRSGAAVIAAPIAPFEQARQSARELVEKYGDFYLIHVATSLEYCEKTDKRGIYKKARAGEIKGFTGVDDPYEAPAKPNLVVDAETQSVRSIVHQIILLLESQGLLDRF</sequence>
<name>MET3_CHAGB</name>
<evidence type="ECO:0000255" key="1">
    <source>
        <dbReference type="HAMAP-Rule" id="MF_03106"/>
    </source>
</evidence>
<organism>
    <name type="scientific">Chaetomium globosum (strain ATCC 6205 / CBS 148.51 / DSM 1962 / NBRC 6347 / NRRL 1970)</name>
    <name type="common">Soil fungus</name>
    <dbReference type="NCBI Taxonomy" id="306901"/>
    <lineage>
        <taxon>Eukaryota</taxon>
        <taxon>Fungi</taxon>
        <taxon>Dikarya</taxon>
        <taxon>Ascomycota</taxon>
        <taxon>Pezizomycotina</taxon>
        <taxon>Sordariomycetes</taxon>
        <taxon>Sordariomycetidae</taxon>
        <taxon>Sordariales</taxon>
        <taxon>Chaetomiaceae</taxon>
        <taxon>Chaetomium</taxon>
    </lineage>
</organism>
<feature type="chain" id="PRO_0000283681" description="Sulfate adenylyltransferase">
    <location>
        <begin position="1"/>
        <end position="573"/>
    </location>
</feature>
<feature type="region of interest" description="N-terminal" evidence="1">
    <location>
        <begin position="1"/>
        <end position="169"/>
    </location>
</feature>
<feature type="region of interest" description="Catalytic" evidence="1">
    <location>
        <begin position="170"/>
        <end position="394"/>
    </location>
</feature>
<feature type="region of interest" description="Allosteric regulation domain; adenylyl-sulfate kinase-like" evidence="1">
    <location>
        <begin position="395"/>
        <end position="573"/>
    </location>
</feature>
<feature type="active site" evidence="1">
    <location>
        <position position="198"/>
    </location>
</feature>
<feature type="active site" evidence="1">
    <location>
        <position position="199"/>
    </location>
</feature>
<feature type="active site" evidence="1">
    <location>
        <position position="200"/>
    </location>
</feature>
<feature type="binding site" evidence="1">
    <location>
        <begin position="197"/>
        <end position="200"/>
    </location>
    <ligand>
        <name>ATP</name>
        <dbReference type="ChEBI" id="CHEBI:30616"/>
    </ligand>
</feature>
<feature type="binding site" evidence="1">
    <location>
        <position position="197"/>
    </location>
    <ligand>
        <name>sulfate</name>
        <dbReference type="ChEBI" id="CHEBI:16189"/>
    </ligand>
</feature>
<feature type="binding site" evidence="1">
    <location>
        <position position="199"/>
    </location>
    <ligand>
        <name>sulfate</name>
        <dbReference type="ChEBI" id="CHEBI:16189"/>
    </ligand>
</feature>
<feature type="binding site" evidence="1">
    <location>
        <begin position="291"/>
        <end position="294"/>
    </location>
    <ligand>
        <name>ATP</name>
        <dbReference type="ChEBI" id="CHEBI:30616"/>
    </ligand>
</feature>
<feature type="binding site" evidence="1">
    <location>
        <position position="295"/>
    </location>
    <ligand>
        <name>sulfate</name>
        <dbReference type="ChEBI" id="CHEBI:16189"/>
    </ligand>
</feature>
<feature type="binding site" evidence="1">
    <location>
        <position position="333"/>
    </location>
    <ligand>
        <name>ATP</name>
        <dbReference type="ChEBI" id="CHEBI:30616"/>
    </ligand>
</feature>
<feature type="binding site" evidence="1">
    <location>
        <begin position="434"/>
        <end position="437"/>
    </location>
    <ligand>
        <name>3'-phosphoadenylyl sulfate</name>
        <dbReference type="ChEBI" id="CHEBI:58339"/>
        <note>allosteric inhibitor</note>
    </ligand>
</feature>
<feature type="binding site" evidence="1">
    <location>
        <position position="451"/>
    </location>
    <ligand>
        <name>3'-phosphoadenylyl sulfate</name>
        <dbReference type="ChEBI" id="CHEBI:58339"/>
        <note>allosteric inhibitor</note>
    </ligand>
</feature>
<feature type="binding site" evidence="1">
    <location>
        <begin position="477"/>
        <end position="478"/>
    </location>
    <ligand>
        <name>3'-phosphoadenylyl sulfate</name>
        <dbReference type="ChEBI" id="CHEBI:58339"/>
        <note>allosteric inhibitor</note>
    </ligand>
</feature>
<feature type="binding site" evidence="1">
    <location>
        <position position="515"/>
    </location>
    <ligand>
        <name>3'-phosphoadenylyl sulfate</name>
        <dbReference type="ChEBI" id="CHEBI:58339"/>
        <note>allosteric inhibitor</note>
    </ligand>
</feature>
<feature type="site" description="Transition state stabilizer" evidence="1">
    <location>
        <position position="203"/>
    </location>
</feature>
<feature type="site" description="Transition state stabilizer" evidence="1">
    <location>
        <position position="206"/>
    </location>
</feature>
<feature type="site" description="Induces change in substrate recognition on ATP binding" evidence="1">
    <location>
        <position position="330"/>
    </location>
</feature>